<reference key="1">
    <citation type="journal article" date="2006" name="PLoS Genet.">
        <title>The complete genome sequence and comparative genome analysis of the high pathogenicity Yersinia enterocolitica strain 8081.</title>
        <authorList>
            <person name="Thomson N.R."/>
            <person name="Howard S."/>
            <person name="Wren B.W."/>
            <person name="Holden M.T.G."/>
            <person name="Crossman L."/>
            <person name="Challis G.L."/>
            <person name="Churcher C."/>
            <person name="Mungall K."/>
            <person name="Brooks K."/>
            <person name="Chillingworth T."/>
            <person name="Feltwell T."/>
            <person name="Abdellah Z."/>
            <person name="Hauser H."/>
            <person name="Jagels K."/>
            <person name="Maddison M."/>
            <person name="Moule S."/>
            <person name="Sanders M."/>
            <person name="Whitehead S."/>
            <person name="Quail M.A."/>
            <person name="Dougan G."/>
            <person name="Parkhill J."/>
            <person name="Prentice M.B."/>
        </authorList>
    </citation>
    <scope>NUCLEOTIDE SEQUENCE [LARGE SCALE GENOMIC DNA]</scope>
    <source>
        <strain>NCTC 13174 / 8081</strain>
    </source>
</reference>
<proteinExistence type="inferred from homology"/>
<comment type="function">
    <text evidence="1">Multifunctional regulator of fatty acid metabolism.</text>
</comment>
<comment type="subunit">
    <text evidence="1">Homodimer.</text>
</comment>
<comment type="subcellular location">
    <subcellularLocation>
        <location evidence="1">Cytoplasm</location>
    </subcellularLocation>
</comment>
<evidence type="ECO:0000255" key="1">
    <source>
        <dbReference type="HAMAP-Rule" id="MF_00696"/>
    </source>
</evidence>
<gene>
    <name evidence="1" type="primary">fadR</name>
    <name type="ordered locus">YE2283</name>
</gene>
<organism>
    <name type="scientific">Yersinia enterocolitica serotype O:8 / biotype 1B (strain NCTC 13174 / 8081)</name>
    <dbReference type="NCBI Taxonomy" id="393305"/>
    <lineage>
        <taxon>Bacteria</taxon>
        <taxon>Pseudomonadati</taxon>
        <taxon>Pseudomonadota</taxon>
        <taxon>Gammaproteobacteria</taxon>
        <taxon>Enterobacterales</taxon>
        <taxon>Yersiniaceae</taxon>
        <taxon>Yersinia</taxon>
    </lineage>
</organism>
<dbReference type="EMBL" id="AM286415">
    <property type="protein sequence ID" value="CAL12343.1"/>
    <property type="molecule type" value="Genomic_DNA"/>
</dbReference>
<dbReference type="RefSeq" id="WP_005162963.1">
    <property type="nucleotide sequence ID" value="NC_008800.1"/>
</dbReference>
<dbReference type="RefSeq" id="YP_001006511.1">
    <property type="nucleotide sequence ID" value="NC_008800.1"/>
</dbReference>
<dbReference type="SMR" id="A1JQP6"/>
<dbReference type="GeneID" id="31409226"/>
<dbReference type="KEGG" id="yen:YE2283"/>
<dbReference type="PATRIC" id="fig|393305.7.peg.2445"/>
<dbReference type="eggNOG" id="COG2186">
    <property type="taxonomic scope" value="Bacteria"/>
</dbReference>
<dbReference type="HOGENOM" id="CLU_017584_9_4_6"/>
<dbReference type="OrthoDB" id="5683977at2"/>
<dbReference type="Proteomes" id="UP000000642">
    <property type="component" value="Chromosome"/>
</dbReference>
<dbReference type="GO" id="GO:0005737">
    <property type="term" value="C:cytoplasm"/>
    <property type="evidence" value="ECO:0007669"/>
    <property type="project" value="UniProtKB-SubCell"/>
</dbReference>
<dbReference type="GO" id="GO:0003677">
    <property type="term" value="F:DNA binding"/>
    <property type="evidence" value="ECO:0007669"/>
    <property type="project" value="UniProtKB-KW"/>
</dbReference>
<dbReference type="GO" id="GO:0003700">
    <property type="term" value="F:DNA-binding transcription factor activity"/>
    <property type="evidence" value="ECO:0007669"/>
    <property type="project" value="UniProtKB-UniRule"/>
</dbReference>
<dbReference type="GO" id="GO:0000062">
    <property type="term" value="F:fatty-acyl-CoA binding"/>
    <property type="evidence" value="ECO:0007669"/>
    <property type="project" value="InterPro"/>
</dbReference>
<dbReference type="GO" id="GO:0006631">
    <property type="term" value="P:fatty acid metabolic process"/>
    <property type="evidence" value="ECO:0007669"/>
    <property type="project" value="UniProtKB-KW"/>
</dbReference>
<dbReference type="GO" id="GO:0019217">
    <property type="term" value="P:regulation of fatty acid metabolic process"/>
    <property type="evidence" value="ECO:0007669"/>
    <property type="project" value="UniProtKB-UniRule"/>
</dbReference>
<dbReference type="CDD" id="cd07377">
    <property type="entry name" value="WHTH_GntR"/>
    <property type="match status" value="1"/>
</dbReference>
<dbReference type="FunFam" id="1.10.10.10:FF:000036">
    <property type="entry name" value="Fatty acid metabolism regulator protein"/>
    <property type="match status" value="1"/>
</dbReference>
<dbReference type="Gene3D" id="1.20.120.530">
    <property type="entry name" value="GntR ligand-binding domain-like"/>
    <property type="match status" value="1"/>
</dbReference>
<dbReference type="Gene3D" id="1.10.10.10">
    <property type="entry name" value="Winged helix-like DNA-binding domain superfamily/Winged helix DNA-binding domain"/>
    <property type="match status" value="1"/>
</dbReference>
<dbReference type="HAMAP" id="MF_00696">
    <property type="entry name" value="HTH_FadR"/>
    <property type="match status" value="1"/>
</dbReference>
<dbReference type="InterPro" id="IPR014178">
    <property type="entry name" value="FA-response_TF_FadR"/>
</dbReference>
<dbReference type="InterPro" id="IPR028374">
    <property type="entry name" value="FadR_C"/>
</dbReference>
<dbReference type="InterPro" id="IPR008920">
    <property type="entry name" value="TF_FadR/GntR_C"/>
</dbReference>
<dbReference type="InterPro" id="IPR000524">
    <property type="entry name" value="Tscrpt_reg_HTH_GntR"/>
</dbReference>
<dbReference type="InterPro" id="IPR036388">
    <property type="entry name" value="WH-like_DNA-bd_sf"/>
</dbReference>
<dbReference type="InterPro" id="IPR036390">
    <property type="entry name" value="WH_DNA-bd_sf"/>
</dbReference>
<dbReference type="NCBIfam" id="TIGR02812">
    <property type="entry name" value="fadR_gamma"/>
    <property type="match status" value="1"/>
</dbReference>
<dbReference type="NCBIfam" id="NF003444">
    <property type="entry name" value="PRK04984.1"/>
    <property type="match status" value="1"/>
</dbReference>
<dbReference type="PANTHER" id="PTHR43537:SF52">
    <property type="entry name" value="FATTY ACID METABOLISM REGULATOR PROTEIN"/>
    <property type="match status" value="1"/>
</dbReference>
<dbReference type="PANTHER" id="PTHR43537">
    <property type="entry name" value="TRANSCRIPTIONAL REGULATOR, GNTR FAMILY"/>
    <property type="match status" value="1"/>
</dbReference>
<dbReference type="Pfam" id="PF07840">
    <property type="entry name" value="FadR_C"/>
    <property type="match status" value="1"/>
</dbReference>
<dbReference type="Pfam" id="PF00392">
    <property type="entry name" value="GntR"/>
    <property type="match status" value="1"/>
</dbReference>
<dbReference type="PRINTS" id="PR00035">
    <property type="entry name" value="HTHGNTR"/>
</dbReference>
<dbReference type="SMART" id="SM00345">
    <property type="entry name" value="HTH_GNTR"/>
    <property type="match status" value="1"/>
</dbReference>
<dbReference type="SUPFAM" id="SSF48008">
    <property type="entry name" value="GntR ligand-binding domain-like"/>
    <property type="match status" value="1"/>
</dbReference>
<dbReference type="SUPFAM" id="SSF46785">
    <property type="entry name" value="Winged helix' DNA-binding domain"/>
    <property type="match status" value="1"/>
</dbReference>
<dbReference type="PROSITE" id="PS50949">
    <property type="entry name" value="HTH_GNTR"/>
    <property type="match status" value="1"/>
</dbReference>
<feature type="chain" id="PRO_0000301517" description="Fatty acid metabolism regulator protein">
    <location>
        <begin position="1"/>
        <end position="239"/>
    </location>
</feature>
<feature type="domain" description="HTH gntR-type" evidence="1">
    <location>
        <begin position="6"/>
        <end position="74"/>
    </location>
</feature>
<feature type="DNA-binding region" description="H-T-H motif" evidence="1">
    <location>
        <begin position="34"/>
        <end position="53"/>
    </location>
</feature>
<keyword id="KW-0010">Activator</keyword>
<keyword id="KW-0963">Cytoplasm</keyword>
<keyword id="KW-0238">DNA-binding</keyword>
<keyword id="KW-0276">Fatty acid metabolism</keyword>
<keyword id="KW-0443">Lipid metabolism</keyword>
<keyword id="KW-0678">Repressor</keyword>
<keyword id="KW-0804">Transcription</keyword>
<keyword id="KW-0805">Transcription regulation</keyword>
<sequence>MVIKAQSPAGFAEEYIIESIWNNRFPPGTILPAERELSELIGVTRTTLREVLQRLARDGWLTIQHGKPTKVNNFWETSGLNILETLARLDHDSVPQLIDNLLAVRTNIATIFVRTAIRNHPEKAQEILAQAQTVDDNAESFTALDYGIFRGLAFASGNPIYGLILNGLKGLYTRVGRYYFSNPEARKLALTFYSRLSTLCDEKAYDQVLDCLRAYGKESGAIWHSMQGTMPSDLAEARR</sequence>
<accession>A1JQP6</accession>
<protein>
    <recommendedName>
        <fullName evidence="1">Fatty acid metabolism regulator protein</fullName>
    </recommendedName>
</protein>
<name>FADR_YERE8</name>